<gene>
    <name type="ordered locus">PM1685</name>
</gene>
<feature type="chain" id="PRO_0000214067" description="Putative quercetin 2,3-dioxygenase PM1685">
    <location>
        <begin position="1"/>
        <end position="233"/>
    </location>
</feature>
<feature type="binding site" evidence="1">
    <location>
        <position position="59"/>
    </location>
    <ligand>
        <name>a divalent metal cation</name>
        <dbReference type="ChEBI" id="CHEBI:60240"/>
    </ligand>
</feature>
<feature type="binding site" evidence="1">
    <location>
        <position position="61"/>
    </location>
    <ligand>
        <name>a divalent metal cation</name>
        <dbReference type="ChEBI" id="CHEBI:60240"/>
    </ligand>
</feature>
<feature type="binding site" evidence="1">
    <location>
        <position position="103"/>
    </location>
    <ligand>
        <name>a divalent metal cation</name>
        <dbReference type="ChEBI" id="CHEBI:60240"/>
    </ligand>
</feature>
<feature type="binding site" evidence="1">
    <location>
        <position position="105"/>
    </location>
    <ligand>
        <name>a divalent metal cation</name>
        <dbReference type="ChEBI" id="CHEBI:60240"/>
    </ligand>
</feature>
<protein>
    <recommendedName>
        <fullName>Putative quercetin 2,3-dioxygenase PM1685</fullName>
        <shortName>Putative quercetinase</shortName>
        <ecNumber>1.13.11.24</ecNumber>
    </recommendedName>
    <alternativeName>
        <fullName>Pirin-like protein PM1685</fullName>
    </alternativeName>
</protein>
<comment type="function">
    <text evidence="1">Putative quercetin 2,3-dioxygenase.</text>
</comment>
<comment type="catalytic activity">
    <reaction>
        <text>quercetin + O2 = 2-(3,4-dihydroxybenzoyloxy)-4,6-dihydroxybenzoate + CO</text>
        <dbReference type="Rhea" id="RHEA:15381"/>
        <dbReference type="ChEBI" id="CHEBI:15379"/>
        <dbReference type="ChEBI" id="CHEBI:17245"/>
        <dbReference type="ChEBI" id="CHEBI:57628"/>
        <dbReference type="ChEBI" id="CHEBI:57694"/>
        <dbReference type="EC" id="1.13.11.24"/>
    </reaction>
</comment>
<comment type="cofactor">
    <cofactor evidence="1">
        <name>a divalent metal cation</name>
        <dbReference type="ChEBI" id="CHEBI:60240"/>
    </cofactor>
    <text evidence="1">Binds 1 divalent metal cation.</text>
</comment>
<comment type="pathway">
    <text>Flavonoid metabolism; quercetin degradation.</text>
</comment>
<comment type="similarity">
    <text evidence="2">Belongs to the pirin family.</text>
</comment>
<proteinExistence type="inferred from homology"/>
<reference key="1">
    <citation type="journal article" date="2001" name="Proc. Natl. Acad. Sci. U.S.A.">
        <title>Complete genomic sequence of Pasteurella multocida Pm70.</title>
        <authorList>
            <person name="May B.J."/>
            <person name="Zhang Q."/>
            <person name="Li L.L."/>
            <person name="Paustian M.L."/>
            <person name="Whittam T.S."/>
            <person name="Kapur V."/>
        </authorList>
    </citation>
    <scope>NUCLEOTIDE SEQUENCE [LARGE SCALE GENOMIC DNA]</scope>
    <source>
        <strain>Pm70</strain>
    </source>
</reference>
<sequence>MLRVRYAHERGKSHPAIHWLRGYHSFSFADYYSPQHIHFSHLRVINEDIIAPQHGFDMHPHQDMEILTYILSGTIEHQDSMGNHTQLHAGEFQIMSAGSGVHHAEINPSSEHDVHLYQIWILPKSKGIAPRYEQGCFADTEGATLILSPEAKDGAFYIHQDMSLWRWQLSLEQSAVKTIPLLPTRRYWLQLVKGQLRVNDVLLNTSDGLAITHENVLQIELIQNSEFLLFDLV</sequence>
<keyword id="KW-0223">Dioxygenase</keyword>
<keyword id="KW-0479">Metal-binding</keyword>
<keyword id="KW-0560">Oxidoreductase</keyword>
<keyword id="KW-1185">Reference proteome</keyword>
<dbReference type="EC" id="1.13.11.24"/>
<dbReference type="EMBL" id="AE004439">
    <property type="protein sequence ID" value="AAK03769.1"/>
    <property type="molecule type" value="Genomic_DNA"/>
</dbReference>
<dbReference type="RefSeq" id="WP_010907288.1">
    <property type="nucleotide sequence ID" value="NC_002663.1"/>
</dbReference>
<dbReference type="SMR" id="Q9CKD7"/>
<dbReference type="STRING" id="272843.PM1685"/>
<dbReference type="EnsemblBacteria" id="AAK03769">
    <property type="protein sequence ID" value="AAK03769"/>
    <property type="gene ID" value="PM1685"/>
</dbReference>
<dbReference type="KEGG" id="pmu:PM1685"/>
<dbReference type="PATRIC" id="fig|272843.6.peg.1705"/>
<dbReference type="HOGENOM" id="CLU_064194_2_2_6"/>
<dbReference type="OrthoDB" id="9780903at2"/>
<dbReference type="UniPathway" id="UPA00724"/>
<dbReference type="Proteomes" id="UP000000809">
    <property type="component" value="Chromosome"/>
</dbReference>
<dbReference type="GO" id="GO:0046872">
    <property type="term" value="F:metal ion binding"/>
    <property type="evidence" value="ECO:0007669"/>
    <property type="project" value="UniProtKB-KW"/>
</dbReference>
<dbReference type="GO" id="GO:0008127">
    <property type="term" value="F:quercetin 2,3-dioxygenase activity"/>
    <property type="evidence" value="ECO:0007669"/>
    <property type="project" value="UniProtKB-EC"/>
</dbReference>
<dbReference type="CDD" id="cd20311">
    <property type="entry name" value="cupin_Yhhw_C"/>
    <property type="match status" value="1"/>
</dbReference>
<dbReference type="CDD" id="cd02910">
    <property type="entry name" value="cupin_Yhhw_N"/>
    <property type="match status" value="1"/>
</dbReference>
<dbReference type="Gene3D" id="2.60.120.10">
    <property type="entry name" value="Jelly Rolls"/>
    <property type="match status" value="2"/>
</dbReference>
<dbReference type="InterPro" id="IPR012093">
    <property type="entry name" value="Pirin"/>
</dbReference>
<dbReference type="InterPro" id="IPR003829">
    <property type="entry name" value="Pirin_N_dom"/>
</dbReference>
<dbReference type="InterPro" id="IPR041602">
    <property type="entry name" value="Quercetinase_C"/>
</dbReference>
<dbReference type="InterPro" id="IPR014710">
    <property type="entry name" value="RmlC-like_jellyroll"/>
</dbReference>
<dbReference type="InterPro" id="IPR011051">
    <property type="entry name" value="RmlC_Cupin_sf"/>
</dbReference>
<dbReference type="PANTHER" id="PTHR43212">
    <property type="entry name" value="QUERCETIN 2,3-DIOXYGENASE"/>
    <property type="match status" value="1"/>
</dbReference>
<dbReference type="PANTHER" id="PTHR43212:SF3">
    <property type="entry name" value="QUERCETIN 2,3-DIOXYGENASE"/>
    <property type="match status" value="1"/>
</dbReference>
<dbReference type="Pfam" id="PF02678">
    <property type="entry name" value="Pirin"/>
    <property type="match status" value="1"/>
</dbReference>
<dbReference type="Pfam" id="PF17954">
    <property type="entry name" value="Pirin_C_2"/>
    <property type="match status" value="1"/>
</dbReference>
<dbReference type="PIRSF" id="PIRSF006232">
    <property type="entry name" value="Pirin"/>
    <property type="match status" value="1"/>
</dbReference>
<dbReference type="SUPFAM" id="SSF51182">
    <property type="entry name" value="RmlC-like cupins"/>
    <property type="match status" value="1"/>
</dbReference>
<name>Y1685_PASMU</name>
<accession>Q9CKD7</accession>
<evidence type="ECO:0000250" key="1"/>
<evidence type="ECO:0000305" key="2"/>
<organism>
    <name type="scientific">Pasteurella multocida (strain Pm70)</name>
    <dbReference type="NCBI Taxonomy" id="272843"/>
    <lineage>
        <taxon>Bacteria</taxon>
        <taxon>Pseudomonadati</taxon>
        <taxon>Pseudomonadota</taxon>
        <taxon>Gammaproteobacteria</taxon>
        <taxon>Pasteurellales</taxon>
        <taxon>Pasteurellaceae</taxon>
        <taxon>Pasteurella</taxon>
    </lineage>
</organism>